<sequence length="1028" mass="116394">MFTASPMSLSKILARRDWENPGVTQWHRLPAHAPFNSWRDEASARADDNASRKRSLNGDWQFSYYAAPEQVPDSWVTEDCADAVTTPVPSNWQMQGFDTPIYTNDTYPIPVNPPFVPAENPTGCYSLTFEVDEQWLESGQTRIVFDGVNSAFYLWCNGKWMGYSQDSRLPAEFDLSAVLRPGTNRLAVLVLRWCDGSYLEDQDMWRMSGIFRDVSLLHKPHTHIADYHAVTELNADYDRAKLQVEVALAGEQFADCEVAVTLWRDGLSVATVSAKPGSAIIDERGNWAERLNVTLPVKDPALWSAETPELYRLTFALRDGQGEILDVEACDVGFRCVEISNGLLKVNGKPLLIRGVNRHEHHPENGQVMDEATMCRDIELMKQHNFNAVRCSHYPNHPLWYTLCDRYGLYVVDEANIETHGMVPMSRLADDPRWLPAMSERVTRMVLRDRNHPSIIIWSLGNESGHGANHDALYRWVKTTDPTRPVQYEGGGANTAATDIVCPMYARVDQDQPFEAVPKWSLKKWIGMPDETRPLILCEYAHAMGNSFGGFAKYWQAFRNHPRLQGGFVWDWVDQALTKKDDNGNAFWAYGGDFGDTPNDRQFCLNGLVFPDRTPHPALFEAQRAQQFFTFTLVSTSPLVIDVHSDYLFRQCDNEQLRWNIARDGEVLASGEVALTIAPQQTQRIEIDAPEFAAAAGEIWLNVDIVQTAATAWSPADHRCAWDQWQLPAPLYIAPPVEGTAKPDLKVKEDVLEVSHQSQRWHFDRASGNLTQWWNNGTATLLAPLSDNFTRAPLDNDIGVSEATRIDPNAWVERWKAAGMYNLTPRLLLCEGEQLAQAVTITTLHAWESNGKALFLSRKVWKIDRAGVLHGDVQVQVANDIPQPARIGLSCQLAQTPQTASWLGLGPDENYPDRKLAARQGRWTLPLDALHTAYIFPTDNGLRCDTRELTFDTHQMQGDFHFSLSRYSQQQLRDTSHHHLLEAEPGCWLNIDAFHMGVGGDDSWSPSVSPEFILQRREMRYAFSWRQD</sequence>
<gene>
    <name type="primary">lacZ</name>
</gene>
<keyword id="KW-0903">Direct protein sequencing</keyword>
<keyword id="KW-0326">Glycosidase</keyword>
<keyword id="KW-0378">Hydrolase</keyword>
<keyword id="KW-0460">Magnesium</keyword>
<keyword id="KW-0479">Metal-binding</keyword>
<keyword id="KW-0915">Sodium</keyword>
<dbReference type="EC" id="3.2.1.23"/>
<dbReference type="EMBL" id="EF371803">
    <property type="protein sequence ID" value="ABN42680.1"/>
    <property type="status" value="ALT_INIT"/>
    <property type="molecule type" value="Genomic_DNA"/>
</dbReference>
<dbReference type="SMR" id="A3FEW8"/>
<dbReference type="CAZy" id="GH2">
    <property type="family name" value="Glycoside Hydrolase Family 2"/>
</dbReference>
<dbReference type="SABIO-RK" id="A3FEW8"/>
<dbReference type="GO" id="GO:0009341">
    <property type="term" value="C:beta-galactosidase complex"/>
    <property type="evidence" value="ECO:0007669"/>
    <property type="project" value="InterPro"/>
</dbReference>
<dbReference type="GO" id="GO:0004565">
    <property type="term" value="F:beta-galactosidase activity"/>
    <property type="evidence" value="ECO:0007669"/>
    <property type="project" value="UniProtKB-EC"/>
</dbReference>
<dbReference type="GO" id="GO:0030246">
    <property type="term" value="F:carbohydrate binding"/>
    <property type="evidence" value="ECO:0007669"/>
    <property type="project" value="InterPro"/>
</dbReference>
<dbReference type="GO" id="GO:0000287">
    <property type="term" value="F:magnesium ion binding"/>
    <property type="evidence" value="ECO:0007669"/>
    <property type="project" value="UniProtKB-UniRule"/>
</dbReference>
<dbReference type="GO" id="GO:0005990">
    <property type="term" value="P:lactose catabolic process"/>
    <property type="evidence" value="ECO:0007669"/>
    <property type="project" value="TreeGrafter"/>
</dbReference>
<dbReference type="FunFam" id="2.60.40.10:FF:000680">
    <property type="entry name" value="Beta-galactosidase"/>
    <property type="match status" value="1"/>
</dbReference>
<dbReference type="FunFam" id="3.20.20.80:FF:000018">
    <property type="entry name" value="Beta-galactosidase"/>
    <property type="match status" value="1"/>
</dbReference>
<dbReference type="Gene3D" id="2.70.98.10">
    <property type="match status" value="1"/>
</dbReference>
<dbReference type="Gene3D" id="2.60.120.260">
    <property type="entry name" value="Galactose-binding domain-like"/>
    <property type="match status" value="1"/>
</dbReference>
<dbReference type="Gene3D" id="3.20.20.80">
    <property type="entry name" value="Glycosidases"/>
    <property type="match status" value="1"/>
</dbReference>
<dbReference type="Gene3D" id="2.60.40.10">
    <property type="entry name" value="Immunoglobulins"/>
    <property type="match status" value="2"/>
</dbReference>
<dbReference type="HAMAP" id="MF_01687">
    <property type="entry name" value="Beta_gal"/>
    <property type="match status" value="1"/>
</dbReference>
<dbReference type="InterPro" id="IPR004199">
    <property type="entry name" value="B-gal_small/dom_5"/>
</dbReference>
<dbReference type="InterPro" id="IPR050347">
    <property type="entry name" value="Bact_Beta-galactosidase"/>
</dbReference>
<dbReference type="InterPro" id="IPR036156">
    <property type="entry name" value="Beta-gal/glucu_dom_sf"/>
</dbReference>
<dbReference type="InterPro" id="IPR011013">
    <property type="entry name" value="Gal_mutarotase_sf_dom"/>
</dbReference>
<dbReference type="InterPro" id="IPR008979">
    <property type="entry name" value="Galactose-bd-like_sf"/>
</dbReference>
<dbReference type="InterPro" id="IPR014718">
    <property type="entry name" value="GH-type_carb-bd"/>
</dbReference>
<dbReference type="InterPro" id="IPR006101">
    <property type="entry name" value="Glyco_hydro_2"/>
</dbReference>
<dbReference type="InterPro" id="IPR023232">
    <property type="entry name" value="Glyco_hydro_2_AS"/>
</dbReference>
<dbReference type="InterPro" id="IPR023933">
    <property type="entry name" value="Glyco_hydro_2_beta_Galsidase"/>
</dbReference>
<dbReference type="InterPro" id="IPR006103">
    <property type="entry name" value="Glyco_hydro_2_cat"/>
</dbReference>
<dbReference type="InterPro" id="IPR023230">
    <property type="entry name" value="Glyco_hydro_2_CS"/>
</dbReference>
<dbReference type="InterPro" id="IPR006102">
    <property type="entry name" value="Glyco_hydro_2_Ig-like"/>
</dbReference>
<dbReference type="InterPro" id="IPR006104">
    <property type="entry name" value="Glyco_hydro_2_N"/>
</dbReference>
<dbReference type="InterPro" id="IPR017853">
    <property type="entry name" value="Glycoside_hydrolase_SF"/>
</dbReference>
<dbReference type="InterPro" id="IPR013783">
    <property type="entry name" value="Ig-like_fold"/>
</dbReference>
<dbReference type="InterPro" id="IPR032312">
    <property type="entry name" value="LacZ_4"/>
</dbReference>
<dbReference type="NCBIfam" id="NF007074">
    <property type="entry name" value="PRK09525.1"/>
    <property type="match status" value="1"/>
</dbReference>
<dbReference type="PANTHER" id="PTHR46323">
    <property type="entry name" value="BETA-GALACTOSIDASE"/>
    <property type="match status" value="1"/>
</dbReference>
<dbReference type="PANTHER" id="PTHR46323:SF2">
    <property type="entry name" value="BETA-GALACTOSIDASE"/>
    <property type="match status" value="1"/>
</dbReference>
<dbReference type="Pfam" id="PF02929">
    <property type="entry name" value="Bgal_small_N"/>
    <property type="match status" value="1"/>
</dbReference>
<dbReference type="Pfam" id="PF00703">
    <property type="entry name" value="Glyco_hydro_2"/>
    <property type="match status" value="1"/>
</dbReference>
<dbReference type="Pfam" id="PF02836">
    <property type="entry name" value="Glyco_hydro_2_C"/>
    <property type="match status" value="1"/>
</dbReference>
<dbReference type="Pfam" id="PF02837">
    <property type="entry name" value="Glyco_hydro_2_N"/>
    <property type="match status" value="1"/>
</dbReference>
<dbReference type="Pfam" id="PF16353">
    <property type="entry name" value="LacZ_4"/>
    <property type="match status" value="1"/>
</dbReference>
<dbReference type="PRINTS" id="PR00132">
    <property type="entry name" value="GLHYDRLASE2"/>
</dbReference>
<dbReference type="SMART" id="SM01038">
    <property type="entry name" value="Bgal_small_N"/>
    <property type="match status" value="1"/>
</dbReference>
<dbReference type="SUPFAM" id="SSF51445">
    <property type="entry name" value="(Trans)glycosidases"/>
    <property type="match status" value="1"/>
</dbReference>
<dbReference type="SUPFAM" id="SSF49303">
    <property type="entry name" value="beta-Galactosidase/glucuronidase domain"/>
    <property type="match status" value="2"/>
</dbReference>
<dbReference type="SUPFAM" id="SSF74650">
    <property type="entry name" value="Galactose mutarotase-like"/>
    <property type="match status" value="1"/>
</dbReference>
<dbReference type="SUPFAM" id="SSF49785">
    <property type="entry name" value="Galactose-binding domain-like"/>
    <property type="match status" value="1"/>
</dbReference>
<dbReference type="PROSITE" id="PS00719">
    <property type="entry name" value="GLYCOSYL_HYDROL_F2_1"/>
    <property type="match status" value="1"/>
</dbReference>
<dbReference type="PROSITE" id="PS00608">
    <property type="entry name" value="GLYCOSYL_HYDROL_F2_2"/>
    <property type="match status" value="1"/>
</dbReference>
<protein>
    <recommendedName>
        <fullName>Beta-galactosidase</fullName>
        <shortName>Beta-gal</shortName>
        <shortName>Bga</shortName>
        <ecNumber>3.2.1.23</ecNumber>
    </recommendedName>
    <alternativeName>
        <fullName>Lactase</fullName>
    </alternativeName>
    <alternativeName>
        <fullName>Transglycosylating beta-galactosidase</fullName>
    </alternativeName>
</protein>
<feature type="chain" id="PRO_0000366982" description="Beta-galactosidase">
    <location>
        <begin position="1"/>
        <end position="1028"/>
    </location>
</feature>
<feature type="active site" description="Proton donor" evidence="1">
    <location>
        <position position="463"/>
    </location>
</feature>
<feature type="active site" description="Nucleophile" evidence="1">
    <location>
        <position position="539"/>
    </location>
</feature>
<feature type="binding site" evidence="1">
    <location>
        <position position="104"/>
    </location>
    <ligand>
        <name>substrate</name>
    </ligand>
</feature>
<feature type="binding site" evidence="1">
    <location>
        <position position="203"/>
    </location>
    <ligand>
        <name>Na(+)</name>
        <dbReference type="ChEBI" id="CHEBI:29101"/>
    </ligand>
</feature>
<feature type="binding site" evidence="1">
    <location>
        <position position="203"/>
    </location>
    <ligand>
        <name>substrate</name>
    </ligand>
</feature>
<feature type="binding site" evidence="1">
    <location>
        <position position="418"/>
    </location>
    <ligand>
        <name>Mg(2+)</name>
        <dbReference type="ChEBI" id="CHEBI:18420"/>
        <label>1</label>
    </ligand>
</feature>
<feature type="binding site" evidence="1">
    <location>
        <position position="420"/>
    </location>
    <ligand>
        <name>Mg(2+)</name>
        <dbReference type="ChEBI" id="CHEBI:18420"/>
        <label>1</label>
    </ligand>
</feature>
<feature type="binding site" evidence="1">
    <location>
        <position position="463"/>
    </location>
    <ligand>
        <name>Mg(2+)</name>
        <dbReference type="ChEBI" id="CHEBI:18420"/>
        <label>1</label>
    </ligand>
</feature>
<feature type="binding site" evidence="1">
    <location>
        <position position="463"/>
    </location>
    <ligand>
        <name>substrate</name>
    </ligand>
</feature>
<feature type="binding site" evidence="1">
    <location>
        <begin position="539"/>
        <end position="542"/>
    </location>
    <ligand>
        <name>substrate</name>
    </ligand>
</feature>
<feature type="binding site" evidence="1">
    <location>
        <position position="599"/>
    </location>
    <ligand>
        <name>Mg(2+)</name>
        <dbReference type="ChEBI" id="CHEBI:18420"/>
        <label>2</label>
    </ligand>
</feature>
<feature type="binding site" evidence="1">
    <location>
        <position position="603"/>
    </location>
    <ligand>
        <name>Na(+)</name>
        <dbReference type="ChEBI" id="CHEBI:29101"/>
    </ligand>
</feature>
<feature type="binding site" evidence="1">
    <location>
        <position position="606"/>
    </location>
    <ligand>
        <name>Na(+)</name>
        <dbReference type="ChEBI" id="CHEBI:29101"/>
    </ligand>
</feature>
<feature type="binding site" evidence="1">
    <location>
        <position position="606"/>
    </location>
    <ligand>
        <name>substrate</name>
    </ligand>
</feature>
<feature type="binding site" evidence="1">
    <location>
        <position position="1004"/>
    </location>
    <ligand>
        <name>substrate</name>
    </ligand>
</feature>
<feature type="site" description="Transition state stabilizer" evidence="1">
    <location>
        <position position="359"/>
    </location>
</feature>
<feature type="site" description="Transition state stabilizer" evidence="1">
    <location>
        <position position="393"/>
    </location>
</feature>
<feature type="site" description="Important for ensuring that an appropriate proportion of lactose is converted to allolactose" evidence="1">
    <location>
        <position position="1004"/>
    </location>
</feature>
<evidence type="ECO:0000250" key="1"/>
<evidence type="ECO:0000269" key="2">
    <source>
    </source>
</evidence>
<evidence type="ECO:0000305" key="3"/>
<comment type="function">
    <text evidence="2">This beta-galactosidase is also able to catalyze glycosyl transfer to a series of acceptors, including hexose, pentose, beta- or alpha-disaccharides, hexahydroxy alcohol, cyclitol, and aromatic glycosides, resulting in the production of galacto-oligosaccharides (GOS).</text>
</comment>
<comment type="catalytic activity">
    <reaction>
        <text>Hydrolysis of terminal non-reducing beta-D-galactose residues in beta-D-galactosides.</text>
        <dbReference type="EC" id="3.2.1.23"/>
    </reaction>
</comment>
<comment type="cofactor">
    <cofactor evidence="3">
        <name>Mg(2+)</name>
        <dbReference type="ChEBI" id="CHEBI:18420"/>
    </cofactor>
    <cofactor evidence="3">
        <name>Mn(2+)</name>
        <dbReference type="ChEBI" id="CHEBI:29035"/>
    </cofactor>
    <cofactor evidence="3">
        <name>Fe cation</name>
        <dbReference type="ChEBI" id="CHEBI:24875"/>
    </cofactor>
    <text evidence="3">Binds 2 magnesium ions per monomer. Can also use manganese and iron.</text>
</comment>
<comment type="cofactor">
    <cofactor evidence="3">
        <name>Na(+)</name>
        <dbReference type="ChEBI" id="CHEBI:29101"/>
    </cofactor>
    <cofactor evidence="3">
        <name>K(+)</name>
        <dbReference type="ChEBI" id="CHEBI:29103"/>
    </cofactor>
    <text evidence="3">Binds 1 sodium ion per monomer. Can also use potassium.</text>
</comment>
<comment type="activity regulation">
    <text evidence="2">Completely inhibited by Hg(2+), Cu(2+) Ag(2+), and partially inhibited by Zn(2+), imidazole and EDTA. Activated by Ca(2+), Co(2+), Ni(2+).</text>
</comment>
<comment type="biophysicochemical properties">
    <kinetics>
        <KM evidence="2">0.06 mM for o-nitrophenyl-beta-D-galactopyranoside (at 37 degrees Celsius)</KM>
        <KM evidence="2">114 mM for lactose (at 37 degrees Celsius)</KM>
        <Vmax evidence="2">0.43 mmol/min/mg enzyme for o-nitrophenyl-beta-D-galactopyranoside (at 37 degrees Celsius)</Vmax>
        <Vmax evidence="2">2.9 mmol/min/mg enzyme for o-nitrophenyl-beta-D-galactopyranoside (at 37 degrees Celsius)</Vmax>
    </kinetics>
    <phDependence>
        <text evidence="2">Optimum pH is 7.5-8.0. Stable between 7.5-10.0.</text>
    </phDependence>
    <temperatureDependence>
        <text evidence="2">Optimum temperature is 37-40 degrees Celsius. Stable below 37 degrees Celsius.</text>
    </temperatureDependence>
</comment>
<comment type="subunit">
    <text evidence="2">Homodimer.</text>
</comment>
<comment type="similarity">
    <text evidence="3">Belongs to the glycosyl hydrolase 2 family.</text>
</comment>
<comment type="sequence caution" evidence="3">
    <conflict type="erroneous initiation">
        <sequence resource="EMBL-CDS" id="ABN42680"/>
    </conflict>
</comment>
<proteinExistence type="evidence at protein level"/>
<reference key="1">
    <citation type="journal article" date="2007" name="Biochem. Biophys. Res. Commun.">
        <title>A novel beta-galactosidase capable of glycosyl transfer from Enterobacter agglomerans B1.</title>
        <authorList>
            <person name="Lu L."/>
            <person name="Xiao M."/>
            <person name="Xu X."/>
            <person name="Li Z."/>
            <person name="Li Y."/>
        </authorList>
    </citation>
    <scope>NUCLEOTIDE SEQUENCE [GENOMIC DNA]</scope>
    <scope>PROTEIN SEQUENCE OF 1-9</scope>
    <scope>FUNCTION AS TRANSGLYCOSYLATING BETA-GALACTOSIDASE</scope>
    <scope>BIOPHYSICOCHEMICAL PROPERTIES</scope>
    <scope>ACTIVITY REGULATION</scope>
    <scope>SUBUNIT</scope>
    <source>
        <strain>B1</strain>
    </source>
</reference>
<organism>
    <name type="scientific">Enterobacter agglomerans</name>
    <name type="common">Erwinia herbicola</name>
    <name type="synonym">Pantoea agglomerans</name>
    <dbReference type="NCBI Taxonomy" id="549"/>
    <lineage>
        <taxon>Bacteria</taxon>
        <taxon>Pseudomonadati</taxon>
        <taxon>Pseudomonadota</taxon>
        <taxon>Gammaproteobacteria</taxon>
        <taxon>Enterobacterales</taxon>
        <taxon>Erwiniaceae</taxon>
        <taxon>Pantoea</taxon>
        <taxon>Pantoea agglomerans group</taxon>
    </lineage>
</organism>
<accession>A3FEW8</accession>
<name>BGAL_ENTAG</name>